<evidence type="ECO:0000255" key="1">
    <source>
        <dbReference type="HAMAP-Rule" id="MF_03136"/>
    </source>
</evidence>
<protein>
    <recommendedName>
        <fullName evidence="1">Catabolic 3-dehydroquinase 1</fullName>
        <shortName evidence="1">cDHQase 1</shortName>
        <ecNumber evidence="1">4.2.1.10</ecNumber>
    </recommendedName>
    <alternativeName>
        <fullName evidence="1">3-dehydroquinate dehydratase 1</fullName>
    </alternativeName>
</protein>
<comment type="function">
    <text evidence="1">Is involved in the catabolism of quinate. Allows the utilization of quinate as carbon source via the beta-ketoadipate pathway.</text>
</comment>
<comment type="catalytic activity">
    <reaction evidence="1">
        <text>3-dehydroquinate = 3-dehydroshikimate + H2O</text>
        <dbReference type="Rhea" id="RHEA:21096"/>
        <dbReference type="ChEBI" id="CHEBI:15377"/>
        <dbReference type="ChEBI" id="CHEBI:16630"/>
        <dbReference type="ChEBI" id="CHEBI:32364"/>
        <dbReference type="EC" id="4.2.1.10"/>
    </reaction>
</comment>
<comment type="pathway">
    <text evidence="1">Aromatic compound metabolism; 3,4-dihydroxybenzoate biosynthesis; 3,4-dihydroxybenzoate from 3-dehydroquinate: step 1/2.</text>
</comment>
<comment type="subunit">
    <text evidence="1">Homododecamer. Adopts a ring-like structure, composed of an arrangement of two hexameric rings stacked on top of one another.</text>
</comment>
<comment type="similarity">
    <text evidence="1">Belongs to the type-II 3-dehydroquinase family.</text>
</comment>
<reference key="1">
    <citation type="submission" date="2005-09" db="EMBL/GenBank/DDBJ databases">
        <title>Annotation of the Aspergillus terreus NIH2624 genome.</title>
        <authorList>
            <person name="Birren B.W."/>
            <person name="Lander E.S."/>
            <person name="Galagan J.E."/>
            <person name="Nusbaum C."/>
            <person name="Devon K."/>
            <person name="Henn M."/>
            <person name="Ma L.-J."/>
            <person name="Jaffe D.B."/>
            <person name="Butler J."/>
            <person name="Alvarez P."/>
            <person name="Gnerre S."/>
            <person name="Grabherr M."/>
            <person name="Kleber M."/>
            <person name="Mauceli E.W."/>
            <person name="Brockman W."/>
            <person name="Rounsley S."/>
            <person name="Young S.K."/>
            <person name="LaButti K."/>
            <person name="Pushparaj V."/>
            <person name="DeCaprio D."/>
            <person name="Crawford M."/>
            <person name="Koehrsen M."/>
            <person name="Engels R."/>
            <person name="Montgomery P."/>
            <person name="Pearson M."/>
            <person name="Howarth C."/>
            <person name="Larson L."/>
            <person name="Luoma S."/>
            <person name="White J."/>
            <person name="Alvarado L."/>
            <person name="Kodira C.D."/>
            <person name="Zeng Q."/>
            <person name="Oleary S."/>
            <person name="Yandava C."/>
            <person name="Denning D.W."/>
            <person name="Nierman W.C."/>
            <person name="Milne T."/>
            <person name="Madden K."/>
        </authorList>
    </citation>
    <scope>NUCLEOTIDE SEQUENCE [LARGE SCALE GENOMIC DNA]</scope>
    <source>
        <strain>NIH 2624 / FGSC A1156</strain>
    </source>
</reference>
<organism>
    <name type="scientific">Aspergillus terreus (strain NIH 2624 / FGSC A1156)</name>
    <dbReference type="NCBI Taxonomy" id="341663"/>
    <lineage>
        <taxon>Eukaryota</taxon>
        <taxon>Fungi</taxon>
        <taxon>Dikarya</taxon>
        <taxon>Ascomycota</taxon>
        <taxon>Pezizomycotina</taxon>
        <taxon>Eurotiomycetes</taxon>
        <taxon>Eurotiomycetidae</taxon>
        <taxon>Eurotiales</taxon>
        <taxon>Aspergillaceae</taxon>
        <taxon>Aspergillus</taxon>
        <taxon>Aspergillus subgen. Circumdati</taxon>
    </lineage>
</organism>
<feature type="chain" id="PRO_0000402359" description="Catabolic 3-dehydroquinase 1">
    <location>
        <begin position="1"/>
        <end position="152"/>
    </location>
</feature>
<feature type="active site" description="Proton acceptor" evidence="1">
    <location>
        <position position="24"/>
    </location>
</feature>
<feature type="active site" description="Proton donor" evidence="1">
    <location>
        <position position="101"/>
    </location>
</feature>
<feature type="binding site" evidence="1">
    <location>
        <position position="75"/>
    </location>
    <ligand>
        <name>substrate</name>
    </ligand>
</feature>
<feature type="binding site" evidence="1">
    <location>
        <position position="81"/>
    </location>
    <ligand>
        <name>substrate</name>
    </ligand>
</feature>
<feature type="binding site" evidence="1">
    <location>
        <position position="88"/>
    </location>
    <ligand>
        <name>substrate</name>
    </ligand>
</feature>
<feature type="binding site" evidence="1">
    <location>
        <begin position="102"/>
        <end position="103"/>
    </location>
    <ligand>
        <name>substrate</name>
    </ligand>
</feature>
<feature type="binding site" evidence="1">
    <location>
        <position position="112"/>
    </location>
    <ligand>
        <name>substrate</name>
    </ligand>
</feature>
<feature type="site" description="Transition state stabilizer" evidence="1">
    <location>
        <position position="19"/>
    </location>
</feature>
<keyword id="KW-0456">Lyase</keyword>
<keyword id="KW-0672">Quinate metabolism</keyword>
<keyword id="KW-1185">Reference proteome</keyword>
<dbReference type="EC" id="4.2.1.10" evidence="1"/>
<dbReference type="EMBL" id="CH476594">
    <property type="protein sequence ID" value="EAU38999.1"/>
    <property type="molecule type" value="Genomic_DNA"/>
</dbReference>
<dbReference type="RefSeq" id="XP_001210439.1">
    <property type="nucleotide sequence ID" value="XM_001210439.1"/>
</dbReference>
<dbReference type="SMR" id="Q0D131"/>
<dbReference type="STRING" id="341663.Q0D131"/>
<dbReference type="EnsemblFungi" id="EAU38999">
    <property type="protein sequence ID" value="EAU38999"/>
    <property type="gene ID" value="ATEG_00353"/>
</dbReference>
<dbReference type="GeneID" id="4355105"/>
<dbReference type="VEuPathDB" id="FungiDB:ATEG_00353"/>
<dbReference type="eggNOG" id="ENOG502S1A9">
    <property type="taxonomic scope" value="Eukaryota"/>
</dbReference>
<dbReference type="HOGENOM" id="CLU_090968_1_0_1"/>
<dbReference type="OMA" id="AYTHYSY"/>
<dbReference type="OrthoDB" id="8191625at2759"/>
<dbReference type="UniPathway" id="UPA00088">
    <property type="reaction ID" value="UER00178"/>
</dbReference>
<dbReference type="Proteomes" id="UP000007963">
    <property type="component" value="Unassembled WGS sequence"/>
</dbReference>
<dbReference type="GO" id="GO:0003855">
    <property type="term" value="F:3-dehydroquinate dehydratase activity"/>
    <property type="evidence" value="ECO:0007669"/>
    <property type="project" value="UniProtKB-UniRule"/>
</dbReference>
<dbReference type="GO" id="GO:0046279">
    <property type="term" value="P:3,4-dihydroxybenzoate biosynthetic process"/>
    <property type="evidence" value="ECO:0007669"/>
    <property type="project" value="UniProtKB-UniRule"/>
</dbReference>
<dbReference type="GO" id="GO:0019631">
    <property type="term" value="P:quinate catabolic process"/>
    <property type="evidence" value="ECO:0007669"/>
    <property type="project" value="TreeGrafter"/>
</dbReference>
<dbReference type="CDD" id="cd00466">
    <property type="entry name" value="DHQase_II"/>
    <property type="match status" value="1"/>
</dbReference>
<dbReference type="Gene3D" id="3.40.50.9100">
    <property type="entry name" value="Dehydroquinase, class II"/>
    <property type="match status" value="1"/>
</dbReference>
<dbReference type="HAMAP" id="MF_00169">
    <property type="entry name" value="AroQ"/>
    <property type="match status" value="1"/>
</dbReference>
<dbReference type="InterPro" id="IPR001874">
    <property type="entry name" value="DHquinase_II"/>
</dbReference>
<dbReference type="InterPro" id="IPR018509">
    <property type="entry name" value="DHquinase_II_CS"/>
</dbReference>
<dbReference type="InterPro" id="IPR036441">
    <property type="entry name" value="DHquinase_II_sf"/>
</dbReference>
<dbReference type="NCBIfam" id="TIGR01088">
    <property type="entry name" value="aroQ"/>
    <property type="match status" value="1"/>
</dbReference>
<dbReference type="NCBIfam" id="NF003804">
    <property type="entry name" value="PRK05395.1-1"/>
    <property type="match status" value="1"/>
</dbReference>
<dbReference type="NCBIfam" id="NF003805">
    <property type="entry name" value="PRK05395.1-2"/>
    <property type="match status" value="1"/>
</dbReference>
<dbReference type="NCBIfam" id="NF003806">
    <property type="entry name" value="PRK05395.1-3"/>
    <property type="match status" value="1"/>
</dbReference>
<dbReference type="NCBIfam" id="NF003807">
    <property type="entry name" value="PRK05395.1-4"/>
    <property type="match status" value="1"/>
</dbReference>
<dbReference type="PANTHER" id="PTHR21272">
    <property type="entry name" value="CATABOLIC 3-DEHYDROQUINASE"/>
    <property type="match status" value="1"/>
</dbReference>
<dbReference type="PANTHER" id="PTHR21272:SF5">
    <property type="entry name" value="CATABOLIC 3-DEHYDROQUINASE"/>
    <property type="match status" value="1"/>
</dbReference>
<dbReference type="Pfam" id="PF01220">
    <property type="entry name" value="DHquinase_II"/>
    <property type="match status" value="1"/>
</dbReference>
<dbReference type="PIRSF" id="PIRSF001399">
    <property type="entry name" value="DHquinase_II"/>
    <property type="match status" value="1"/>
</dbReference>
<dbReference type="SUPFAM" id="SSF52304">
    <property type="entry name" value="Type II 3-dehydroquinate dehydratase"/>
    <property type="match status" value="1"/>
</dbReference>
<dbReference type="PROSITE" id="PS01029">
    <property type="entry name" value="DEHYDROQUINASE_II"/>
    <property type="match status" value="1"/>
</dbReference>
<sequence>MPKSILLINGPNLNLLGTREPHIYGSTTLADVEAASKAHAESLGATLESFQSNHEGAIVDRIQAARGRVDGIVINPGAYTHTSVAIRDALLGVGIPFIELHVSNVHAREPWRHHSYFSDKAAGIIVGLGVYGYRVAVEHVAVNFKELEKANL</sequence>
<accession>Q0D131</accession>
<proteinExistence type="inferred from homology"/>
<gene>
    <name evidence="1" type="primary">qutE1</name>
    <name type="ORF">ATEG_00353</name>
</gene>
<name>3DHQ1_ASPTN</name>